<accession>Q65U21</accession>
<proteinExistence type="inferred from homology"/>
<gene>
    <name evidence="1" type="primary">msbA</name>
    <name type="synonym">mdlB</name>
    <name type="ordered locus">MS0932</name>
</gene>
<evidence type="ECO:0000255" key="1">
    <source>
        <dbReference type="HAMAP-Rule" id="MF_01703"/>
    </source>
</evidence>
<evidence type="ECO:0000305" key="2"/>
<comment type="function">
    <text evidence="1">Involved in lipopolysaccharide (LPS) biosynthesis. Translocates lipid A-core from the inner to the outer leaflet of the inner membrane. Transmembrane domains (TMD) form a pore in the inner membrane and the ATP-binding domain (NBD) is responsible for energy generation.</text>
</comment>
<comment type="catalytic activity">
    <reaction evidence="1">
        <text>ATP + H2O + lipid A-core oligosaccharideSide 1 = ADP + phosphate + lipid A-core oligosaccharideSide 2.</text>
        <dbReference type="EC" id="7.5.2.6"/>
    </reaction>
</comment>
<comment type="subunit">
    <text evidence="1">Homodimer.</text>
</comment>
<comment type="subcellular location">
    <subcellularLocation>
        <location evidence="1">Cell inner membrane</location>
        <topology evidence="1">Multi-pass membrane protein</topology>
    </subcellularLocation>
</comment>
<comment type="domain">
    <text evidence="1">In MsbA the ATP-binding domain (NBD) and the transmembrane domain (TMD) are fused.</text>
</comment>
<comment type="similarity">
    <text evidence="1">Belongs to the ABC transporter superfamily. Lipid exporter (TC 3.A.1.106) family.</text>
</comment>
<comment type="sequence caution" evidence="2">
    <conflict type="erroneous initiation">
        <sequence resource="EMBL-CDS" id="AAU37539"/>
    </conflict>
</comment>
<protein>
    <recommendedName>
        <fullName evidence="1">ATP-dependent lipid A-core flippase</fullName>
        <ecNumber evidence="1">7.5.2.6</ecNumber>
    </recommendedName>
    <alternativeName>
        <fullName evidence="1">Lipid A export ATP-binding/permease protein MsbA</fullName>
    </alternativeName>
</protein>
<organism>
    <name type="scientific">Mannheimia succiniciproducens (strain KCTC 0769BP / MBEL55E)</name>
    <dbReference type="NCBI Taxonomy" id="221988"/>
    <lineage>
        <taxon>Bacteria</taxon>
        <taxon>Pseudomonadati</taxon>
        <taxon>Pseudomonadota</taxon>
        <taxon>Gammaproteobacteria</taxon>
        <taxon>Pasteurellales</taxon>
        <taxon>Pasteurellaceae</taxon>
        <taxon>Basfia</taxon>
    </lineage>
</organism>
<feature type="chain" id="PRO_0000092587" description="ATP-dependent lipid A-core flippase">
    <location>
        <begin position="1"/>
        <end position="585"/>
    </location>
</feature>
<feature type="transmembrane region" description="Helical" evidence="1">
    <location>
        <begin position="18"/>
        <end position="38"/>
    </location>
</feature>
<feature type="transmembrane region" description="Helical" evidence="1">
    <location>
        <begin position="68"/>
        <end position="88"/>
    </location>
</feature>
<feature type="transmembrane region" description="Helical" evidence="1">
    <location>
        <begin position="142"/>
        <end position="162"/>
    </location>
</feature>
<feature type="transmembrane region" description="Helical" evidence="1">
    <location>
        <begin position="163"/>
        <end position="183"/>
    </location>
</feature>
<feature type="transmembrane region" description="Helical" evidence="1">
    <location>
        <begin position="255"/>
        <end position="275"/>
    </location>
</feature>
<feature type="transmembrane region" description="Helical" evidence="1">
    <location>
        <begin position="277"/>
        <end position="297"/>
    </location>
</feature>
<feature type="domain" description="ABC transmembrane type-1" evidence="1">
    <location>
        <begin position="30"/>
        <end position="313"/>
    </location>
</feature>
<feature type="domain" description="ABC transporter" evidence="1">
    <location>
        <begin position="345"/>
        <end position="581"/>
    </location>
</feature>
<feature type="binding site" evidence="1">
    <location>
        <begin position="379"/>
        <end position="386"/>
    </location>
    <ligand>
        <name>ATP</name>
        <dbReference type="ChEBI" id="CHEBI:30616"/>
    </ligand>
</feature>
<dbReference type="EC" id="7.5.2.6" evidence="1"/>
<dbReference type="EMBL" id="AE016827">
    <property type="protein sequence ID" value="AAU37539.1"/>
    <property type="status" value="ALT_INIT"/>
    <property type="molecule type" value="Genomic_DNA"/>
</dbReference>
<dbReference type="SMR" id="Q65U21"/>
<dbReference type="STRING" id="221988.MS0932"/>
<dbReference type="KEGG" id="msu:MS0932"/>
<dbReference type="eggNOG" id="COG1132">
    <property type="taxonomic scope" value="Bacteria"/>
</dbReference>
<dbReference type="HOGENOM" id="CLU_000604_84_3_6"/>
<dbReference type="Proteomes" id="UP000000607">
    <property type="component" value="Chromosome"/>
</dbReference>
<dbReference type="GO" id="GO:0005886">
    <property type="term" value="C:plasma membrane"/>
    <property type="evidence" value="ECO:0007669"/>
    <property type="project" value="UniProtKB-SubCell"/>
</dbReference>
<dbReference type="GO" id="GO:0015421">
    <property type="term" value="F:ABC-type oligopeptide transporter activity"/>
    <property type="evidence" value="ECO:0007669"/>
    <property type="project" value="TreeGrafter"/>
</dbReference>
<dbReference type="GO" id="GO:0005524">
    <property type="term" value="F:ATP binding"/>
    <property type="evidence" value="ECO:0007669"/>
    <property type="project" value="UniProtKB-KW"/>
</dbReference>
<dbReference type="GO" id="GO:0016887">
    <property type="term" value="F:ATP hydrolysis activity"/>
    <property type="evidence" value="ECO:0007669"/>
    <property type="project" value="InterPro"/>
</dbReference>
<dbReference type="GO" id="GO:0034040">
    <property type="term" value="F:ATPase-coupled lipid transmembrane transporter activity"/>
    <property type="evidence" value="ECO:0007669"/>
    <property type="project" value="InterPro"/>
</dbReference>
<dbReference type="CDD" id="cd18552">
    <property type="entry name" value="ABC_6TM_MsbA_like"/>
    <property type="match status" value="1"/>
</dbReference>
<dbReference type="FunFam" id="3.40.50.300:FF:000140">
    <property type="entry name" value="Lipid A export ATP-binding/permease protein MsbA"/>
    <property type="match status" value="1"/>
</dbReference>
<dbReference type="Gene3D" id="1.20.1560.10">
    <property type="entry name" value="ABC transporter type 1, transmembrane domain"/>
    <property type="match status" value="1"/>
</dbReference>
<dbReference type="Gene3D" id="3.40.50.300">
    <property type="entry name" value="P-loop containing nucleotide triphosphate hydrolases"/>
    <property type="match status" value="1"/>
</dbReference>
<dbReference type="InterPro" id="IPR003593">
    <property type="entry name" value="AAA+_ATPase"/>
</dbReference>
<dbReference type="InterPro" id="IPR011527">
    <property type="entry name" value="ABC1_TM_dom"/>
</dbReference>
<dbReference type="InterPro" id="IPR036640">
    <property type="entry name" value="ABC1_TM_sf"/>
</dbReference>
<dbReference type="InterPro" id="IPR003439">
    <property type="entry name" value="ABC_transporter-like_ATP-bd"/>
</dbReference>
<dbReference type="InterPro" id="IPR017871">
    <property type="entry name" value="ABC_transporter-like_CS"/>
</dbReference>
<dbReference type="InterPro" id="IPR011917">
    <property type="entry name" value="ABC_transpr_lipidA"/>
</dbReference>
<dbReference type="InterPro" id="IPR027417">
    <property type="entry name" value="P-loop_NTPase"/>
</dbReference>
<dbReference type="InterPro" id="IPR039421">
    <property type="entry name" value="Type_1_exporter"/>
</dbReference>
<dbReference type="NCBIfam" id="TIGR02203">
    <property type="entry name" value="MsbA_lipidA"/>
    <property type="match status" value="1"/>
</dbReference>
<dbReference type="NCBIfam" id="NF008381">
    <property type="entry name" value="PRK11176.1"/>
    <property type="match status" value="1"/>
</dbReference>
<dbReference type="PANTHER" id="PTHR43394:SF1">
    <property type="entry name" value="ATP-BINDING CASSETTE SUB-FAMILY B MEMBER 10, MITOCHONDRIAL"/>
    <property type="match status" value="1"/>
</dbReference>
<dbReference type="PANTHER" id="PTHR43394">
    <property type="entry name" value="ATP-DEPENDENT PERMEASE MDL1, MITOCHONDRIAL"/>
    <property type="match status" value="1"/>
</dbReference>
<dbReference type="Pfam" id="PF00664">
    <property type="entry name" value="ABC_membrane"/>
    <property type="match status" value="1"/>
</dbReference>
<dbReference type="Pfam" id="PF00005">
    <property type="entry name" value="ABC_tran"/>
    <property type="match status" value="1"/>
</dbReference>
<dbReference type="SMART" id="SM00382">
    <property type="entry name" value="AAA"/>
    <property type="match status" value="1"/>
</dbReference>
<dbReference type="SUPFAM" id="SSF90123">
    <property type="entry name" value="ABC transporter transmembrane region"/>
    <property type="match status" value="1"/>
</dbReference>
<dbReference type="SUPFAM" id="SSF52540">
    <property type="entry name" value="P-loop containing nucleoside triphosphate hydrolases"/>
    <property type="match status" value="1"/>
</dbReference>
<dbReference type="PROSITE" id="PS50929">
    <property type="entry name" value="ABC_TM1F"/>
    <property type="match status" value="1"/>
</dbReference>
<dbReference type="PROSITE" id="PS00211">
    <property type="entry name" value="ABC_TRANSPORTER_1"/>
    <property type="match status" value="1"/>
</dbReference>
<dbReference type="PROSITE" id="PS50893">
    <property type="entry name" value="ABC_TRANSPORTER_2"/>
    <property type="match status" value="1"/>
</dbReference>
<dbReference type="PROSITE" id="PS51239">
    <property type="entry name" value="MSBA"/>
    <property type="match status" value="1"/>
</dbReference>
<reference key="1">
    <citation type="journal article" date="2004" name="Nat. Biotechnol.">
        <title>The genome sequence of the capnophilic rumen bacterium Mannheimia succiniciproducens.</title>
        <authorList>
            <person name="Hong S.H."/>
            <person name="Kim J.S."/>
            <person name="Lee S.Y."/>
            <person name="In Y.H."/>
            <person name="Choi S.S."/>
            <person name="Rih J.-K."/>
            <person name="Kim C.H."/>
            <person name="Jeong H."/>
            <person name="Hur C.G."/>
            <person name="Kim J.J."/>
        </authorList>
    </citation>
    <scope>NUCLEOTIDE SEQUENCE [LARGE SCALE GENOMIC DNA]</scope>
    <source>
        <strain>KCTC 0769BP / MBEL55E</strain>
    </source>
</reference>
<name>MSBA_MANSM</name>
<sequence>MQKLQENDLSTSQTFKRLWPTIAPFKIGLIAAAAALVLNALTDSGLIYLLKPLLDDGFGKADTSFLKLMAVLVIVFIFIRGITSFISSYCLAWVSGKVVMTMRRRLFKHLMYMPVSFFDQNSTGRLLSRITYDSEQVANSSSNALVTIVREGAYIISLLAVMIATSWQLSVVLFIIGPVIAVLIRLVSKIFRRLSKNMQNSMGELTATAEQMLKGHKVVLSFGGQQIEEQRFNEVSNDMRRKGMKMVVADAISDPIVQIIASLALSAVLYLATIPSIMSQNLSAGSFTVVFSSMLAMLRPLKSLTNVNSQFQRGMAACQTLFDILDLDTEKDKGKYEAERVKGDVSFKDVSFTYQGKDQPALKHLSFDIPHGKTFALVGRSGSGKSTIANLVTRFYDINQGEILLDGVNVQDYTLSNLRTHCSVVSQQVHLFNDTIANNIAYAAKDKYSREQIIAAAKAAHAMEFIEPLENGLDTVIGENGASLSGGQRQRLAIARALLRDSPVLILDEATSALDTESERAIQAALEELQKDRTVLVIAHRLSTIEKADEILVIDHGEICERGSHEELLALNGAYKQLHKMQFNG</sequence>
<keyword id="KW-0067">ATP-binding</keyword>
<keyword id="KW-0997">Cell inner membrane</keyword>
<keyword id="KW-1003">Cell membrane</keyword>
<keyword id="KW-0445">Lipid transport</keyword>
<keyword id="KW-0472">Membrane</keyword>
<keyword id="KW-0547">Nucleotide-binding</keyword>
<keyword id="KW-1278">Translocase</keyword>
<keyword id="KW-0812">Transmembrane</keyword>
<keyword id="KW-1133">Transmembrane helix</keyword>
<keyword id="KW-0813">Transport</keyword>